<organism>
    <name type="scientific">Felis catus</name>
    <name type="common">Cat</name>
    <name type="synonym">Felis silvestris catus</name>
    <dbReference type="NCBI Taxonomy" id="9685"/>
    <lineage>
        <taxon>Eukaryota</taxon>
        <taxon>Metazoa</taxon>
        <taxon>Chordata</taxon>
        <taxon>Craniata</taxon>
        <taxon>Vertebrata</taxon>
        <taxon>Euteleostomi</taxon>
        <taxon>Mammalia</taxon>
        <taxon>Eutheria</taxon>
        <taxon>Laurasiatheria</taxon>
        <taxon>Carnivora</taxon>
        <taxon>Feliformia</taxon>
        <taxon>Felidae</taxon>
        <taxon>Felinae</taxon>
        <taxon>Felis</taxon>
    </lineage>
</organism>
<geneLocation type="mitochondrion"/>
<keyword id="KW-0249">Electron transport</keyword>
<keyword id="KW-0472">Membrane</keyword>
<keyword id="KW-0496">Mitochondrion</keyword>
<keyword id="KW-0999">Mitochondrion inner membrane</keyword>
<keyword id="KW-0520">NAD</keyword>
<keyword id="KW-1185">Reference proteome</keyword>
<keyword id="KW-0679">Respiratory chain</keyword>
<keyword id="KW-1278">Translocase</keyword>
<keyword id="KW-0812">Transmembrane</keyword>
<keyword id="KW-1133">Transmembrane helix</keyword>
<keyword id="KW-0813">Transport</keyword>
<keyword id="KW-0830">Ubiquinone</keyword>
<gene>
    <name type="primary">MT-ND6</name>
    <name type="synonym">MTND6</name>
    <name type="synonym">NADH6</name>
    <name type="synonym">ND6</name>
</gene>
<name>NU6M_FELCA</name>
<proteinExistence type="inferred from homology"/>
<comment type="function">
    <text evidence="1">Core subunit of the mitochondrial membrane respiratory chain NADH dehydrogenase (Complex I) which catalyzes electron transfer from NADH through the respiratory chain, using ubiquinone as an electron acceptor. Essential for the catalytic activity and assembly of complex I.</text>
</comment>
<comment type="catalytic activity">
    <reaction evidence="1">
        <text>a ubiquinone + NADH + 5 H(+)(in) = a ubiquinol + NAD(+) + 4 H(+)(out)</text>
        <dbReference type="Rhea" id="RHEA:29091"/>
        <dbReference type="Rhea" id="RHEA-COMP:9565"/>
        <dbReference type="Rhea" id="RHEA-COMP:9566"/>
        <dbReference type="ChEBI" id="CHEBI:15378"/>
        <dbReference type="ChEBI" id="CHEBI:16389"/>
        <dbReference type="ChEBI" id="CHEBI:17976"/>
        <dbReference type="ChEBI" id="CHEBI:57540"/>
        <dbReference type="ChEBI" id="CHEBI:57945"/>
        <dbReference type="EC" id="7.1.1.2"/>
    </reaction>
</comment>
<comment type="subunit">
    <text evidence="2">Core subunit of respiratory chain NADH dehydrogenase (Complex I) which is composed of 45 different subunits.</text>
</comment>
<comment type="subcellular location">
    <subcellularLocation>
        <location evidence="2">Mitochondrion inner membrane</location>
        <topology evidence="3">Multi-pass membrane protein</topology>
    </subcellularLocation>
</comment>
<comment type="similarity">
    <text evidence="4">Belongs to the complex I subunit 6 family.</text>
</comment>
<reference key="1">
    <citation type="journal article" date="1996" name="Genomics">
        <title>Complete nucleotide sequences of the domestic cat (Felis catus) mitochondrial genome and a transposed mtDNA tandem repeat (Numt) in the nuclear genome.</title>
        <authorList>
            <person name="Lopez J.V."/>
            <person name="Cevario S."/>
            <person name="O'Brien S.J."/>
        </authorList>
    </citation>
    <scope>NUCLEOTIDE SEQUENCE [LARGE SCALE GENOMIC DNA]</scope>
    <source>
        <strain evidence="5">Abyssinian</strain>
        <tissue>Blood</tissue>
    </source>
</reference>
<evidence type="ECO:0000250" key="1">
    <source>
        <dbReference type="UniProtKB" id="P03923"/>
    </source>
</evidence>
<evidence type="ECO:0000250" key="2">
    <source>
        <dbReference type="UniProtKB" id="P03924"/>
    </source>
</evidence>
<evidence type="ECO:0000255" key="3"/>
<evidence type="ECO:0000305" key="4"/>
<evidence type="ECO:0000312" key="5">
    <source>
        <dbReference type="Proteomes" id="UP000011712"/>
    </source>
</evidence>
<feature type="chain" id="PRO_0000118282" description="NADH-ubiquinone oxidoreductase chain 6">
    <location>
        <begin position="1"/>
        <end position="175"/>
    </location>
</feature>
<feature type="transmembrane region" description="Helical" evidence="3">
    <location>
        <begin position="1"/>
        <end position="21"/>
    </location>
</feature>
<feature type="transmembrane region" description="Helical" evidence="3">
    <location>
        <begin position="25"/>
        <end position="45"/>
    </location>
</feature>
<feature type="transmembrane region" description="Helical" evidence="3">
    <location>
        <begin position="47"/>
        <end position="67"/>
    </location>
</feature>
<feature type="transmembrane region" description="Helical" evidence="3">
    <location>
        <begin position="88"/>
        <end position="108"/>
    </location>
</feature>
<feature type="transmembrane region" description="Helical" evidence="3">
    <location>
        <begin position="149"/>
        <end position="169"/>
    </location>
</feature>
<dbReference type="EC" id="7.1.1.2" evidence="1"/>
<dbReference type="EMBL" id="U20753">
    <property type="protein sequence ID" value="AAC48580.1"/>
    <property type="molecule type" value="Genomic_DNA"/>
</dbReference>
<dbReference type="PIR" id="T11413">
    <property type="entry name" value="T11413"/>
</dbReference>
<dbReference type="RefSeq" id="NP_008262.1">
    <property type="nucleotide sequence ID" value="NC_001700.1"/>
</dbReference>
<dbReference type="SMR" id="P48926"/>
<dbReference type="FunCoup" id="P48926">
    <property type="interactions" value="9"/>
</dbReference>
<dbReference type="STRING" id="9685.ENSFCAP00000025720"/>
<dbReference type="PaxDb" id="9685-ENSFCAP00000025720"/>
<dbReference type="Ensembl" id="ENSFCAT00000032660.1">
    <property type="protein sequence ID" value="ENSFCAP00000025720.1"/>
    <property type="gene ID" value="ENSFCAG00000032075.1"/>
</dbReference>
<dbReference type="GeneID" id="807930"/>
<dbReference type="KEGG" id="fca:807930"/>
<dbReference type="CTD" id="4541"/>
<dbReference type="VGNC" id="VGNC:80938">
    <property type="gene designation" value="MT-ND6"/>
</dbReference>
<dbReference type="eggNOG" id="ENOG502S2Q2">
    <property type="taxonomic scope" value="Eukaryota"/>
</dbReference>
<dbReference type="GeneTree" id="ENSGT00390000003988"/>
<dbReference type="HOGENOM" id="CLU_129718_0_0_1"/>
<dbReference type="InParanoid" id="P48926"/>
<dbReference type="OMA" id="WVIYDTG"/>
<dbReference type="OrthoDB" id="9837654at2759"/>
<dbReference type="Proteomes" id="UP000011712">
    <property type="component" value="Mitochondrion"/>
</dbReference>
<dbReference type="Bgee" id="ENSFCAG00000032075">
    <property type="expression patterns" value="Expressed in embryonic head and 9 other cell types or tissues"/>
</dbReference>
<dbReference type="GO" id="GO:0005743">
    <property type="term" value="C:mitochondrial inner membrane"/>
    <property type="evidence" value="ECO:0000250"/>
    <property type="project" value="UniProtKB"/>
</dbReference>
<dbReference type="GO" id="GO:0005739">
    <property type="term" value="C:mitochondrion"/>
    <property type="evidence" value="ECO:0000318"/>
    <property type="project" value="GO_Central"/>
</dbReference>
<dbReference type="GO" id="GO:0008137">
    <property type="term" value="F:NADH dehydrogenase (ubiquinone) activity"/>
    <property type="evidence" value="ECO:0000250"/>
    <property type="project" value="UniProtKB"/>
</dbReference>
<dbReference type="GO" id="GO:0006120">
    <property type="term" value="P:mitochondrial electron transport, NADH to ubiquinone"/>
    <property type="evidence" value="ECO:0000250"/>
    <property type="project" value="UniProtKB"/>
</dbReference>
<dbReference type="GO" id="GO:0032981">
    <property type="term" value="P:mitochondrial respiratory chain complex I assembly"/>
    <property type="evidence" value="ECO:0000250"/>
    <property type="project" value="UniProtKB"/>
</dbReference>
<dbReference type="Gene3D" id="1.20.120.1200">
    <property type="entry name" value="NADH-ubiquinone/plastoquinone oxidoreductase chain 6, subunit NuoJ"/>
    <property type="match status" value="1"/>
</dbReference>
<dbReference type="InterPro" id="IPR050269">
    <property type="entry name" value="ComplexI_Subunit6"/>
</dbReference>
<dbReference type="InterPro" id="IPR001457">
    <property type="entry name" value="NADH_UbQ/plastoQ_OxRdtase_su6"/>
</dbReference>
<dbReference type="InterPro" id="IPR042106">
    <property type="entry name" value="Nuo/plastoQ_OxRdtase_6_NuoJ"/>
</dbReference>
<dbReference type="PANTHER" id="PTHR11435">
    <property type="entry name" value="NADH UBIQUINONE OXIDOREDUCTASE SUBUNIT ND6"/>
    <property type="match status" value="1"/>
</dbReference>
<dbReference type="PANTHER" id="PTHR11435:SF1">
    <property type="entry name" value="NADH-UBIQUINONE OXIDOREDUCTASE CHAIN 6"/>
    <property type="match status" value="1"/>
</dbReference>
<dbReference type="Pfam" id="PF00499">
    <property type="entry name" value="Oxidored_q3"/>
    <property type="match status" value="1"/>
</dbReference>
<sequence>MMTYIVFILSTVFVVSFVSFSSKPSPIYGGFGLIVAGGTGCGIVLNFGGSFLGLMVFLIYLGGMLVVFGYTTAMATEPYPEAWTSNKAVLAMFITGVLAELLTACYILKEDEVEVVFKFNGAGDWVIYDTGDSGFFSEEAMGIAALYSYGTWLVVVTGWSLLIGVLVIMEVTRGN</sequence>
<protein>
    <recommendedName>
        <fullName>NADH-ubiquinone oxidoreductase chain 6</fullName>
        <ecNumber evidence="1">7.1.1.2</ecNumber>
    </recommendedName>
    <alternativeName>
        <fullName>NADH dehydrogenase subunit 6</fullName>
    </alternativeName>
</protein>
<accession>P48926</accession>